<keyword id="KW-1003">Cell membrane</keyword>
<keyword id="KW-0472">Membrane</keyword>
<keyword id="KW-0520">NAD</keyword>
<keyword id="KW-0874">Quinone</keyword>
<keyword id="KW-1185">Reference proteome</keyword>
<keyword id="KW-1278">Translocase</keyword>
<keyword id="KW-0812">Transmembrane</keyword>
<keyword id="KW-1133">Transmembrane helix</keyword>
<keyword id="KW-0813">Transport</keyword>
<accession>Q67P12</accession>
<comment type="function">
    <text evidence="1">NDH-1 shuttles electrons from NADH, via FMN and iron-sulfur (Fe-S) centers, to quinones in the respiratory chain. The immediate electron acceptor for the enzyme in this species is believed to be a menaquinone. Couples the redox reaction to proton translocation (for every two electrons transferred, four hydrogen ions are translocated across the cytoplasmic membrane), and thus conserves the redox energy in a proton gradient.</text>
</comment>
<comment type="catalytic activity">
    <reaction evidence="1">
        <text>a quinone + NADH + 5 H(+)(in) = a quinol + NAD(+) + 4 H(+)(out)</text>
        <dbReference type="Rhea" id="RHEA:57888"/>
        <dbReference type="ChEBI" id="CHEBI:15378"/>
        <dbReference type="ChEBI" id="CHEBI:24646"/>
        <dbReference type="ChEBI" id="CHEBI:57540"/>
        <dbReference type="ChEBI" id="CHEBI:57945"/>
        <dbReference type="ChEBI" id="CHEBI:132124"/>
    </reaction>
</comment>
<comment type="subunit">
    <text evidence="1">NDH-1 is composed of 14 different subunits. Subunits NuoA, H, J, K, L, M, N constitute the membrane sector of the complex.</text>
</comment>
<comment type="subcellular location">
    <subcellularLocation>
        <location evidence="1">Cell membrane</location>
        <topology evidence="1">Multi-pass membrane protein</topology>
    </subcellularLocation>
</comment>
<comment type="similarity">
    <text evidence="1">Belongs to the complex I subunit 4L family.</text>
</comment>
<reference key="1">
    <citation type="journal article" date="2004" name="Nucleic Acids Res.">
        <title>Genome sequence of Symbiobacterium thermophilum, an uncultivable bacterium that depends on microbial commensalism.</title>
        <authorList>
            <person name="Ueda K."/>
            <person name="Yamashita A."/>
            <person name="Ishikawa J."/>
            <person name="Shimada M."/>
            <person name="Watsuji T."/>
            <person name="Morimura K."/>
            <person name="Ikeda H."/>
            <person name="Hattori M."/>
            <person name="Beppu T."/>
        </authorList>
    </citation>
    <scope>NUCLEOTIDE SEQUENCE [LARGE SCALE GENOMIC DNA]</scope>
    <source>
        <strain>DSM 24528 / JCM 14929 / IAM 14863 / T</strain>
    </source>
</reference>
<gene>
    <name evidence="1" type="primary">nuoK1</name>
    <name type="ordered locus">STH1596</name>
</gene>
<feature type="chain" id="PRO_0000390258" description="NADH-quinone oxidoreductase subunit K 1">
    <location>
        <begin position="1"/>
        <end position="102"/>
    </location>
</feature>
<feature type="transmembrane region" description="Helical" evidence="1">
    <location>
        <begin position="6"/>
        <end position="26"/>
    </location>
</feature>
<feature type="transmembrane region" description="Helical" evidence="1">
    <location>
        <begin position="31"/>
        <end position="51"/>
    </location>
</feature>
<feature type="transmembrane region" description="Helical" evidence="1">
    <location>
        <begin position="65"/>
        <end position="85"/>
    </location>
</feature>
<dbReference type="EC" id="7.1.1.-" evidence="1"/>
<dbReference type="EMBL" id="AP006840">
    <property type="protein sequence ID" value="BAD40581.1"/>
    <property type="molecule type" value="Genomic_DNA"/>
</dbReference>
<dbReference type="RefSeq" id="WP_011195725.1">
    <property type="nucleotide sequence ID" value="NC_006177.1"/>
</dbReference>
<dbReference type="SMR" id="Q67P12"/>
<dbReference type="STRING" id="292459.STH1596"/>
<dbReference type="KEGG" id="sth:STH1596"/>
<dbReference type="eggNOG" id="COG0713">
    <property type="taxonomic scope" value="Bacteria"/>
</dbReference>
<dbReference type="HOGENOM" id="CLU_144724_0_0_9"/>
<dbReference type="OrthoDB" id="9810120at2"/>
<dbReference type="Proteomes" id="UP000000417">
    <property type="component" value="Chromosome"/>
</dbReference>
<dbReference type="GO" id="GO:0030964">
    <property type="term" value="C:NADH dehydrogenase complex"/>
    <property type="evidence" value="ECO:0007669"/>
    <property type="project" value="TreeGrafter"/>
</dbReference>
<dbReference type="GO" id="GO:0005886">
    <property type="term" value="C:plasma membrane"/>
    <property type="evidence" value="ECO:0007669"/>
    <property type="project" value="UniProtKB-SubCell"/>
</dbReference>
<dbReference type="GO" id="GO:0050136">
    <property type="term" value="F:NADH:ubiquinone reductase (non-electrogenic) activity"/>
    <property type="evidence" value="ECO:0007669"/>
    <property type="project" value="UniProtKB-UniRule"/>
</dbReference>
<dbReference type="GO" id="GO:0048038">
    <property type="term" value="F:quinone binding"/>
    <property type="evidence" value="ECO:0007669"/>
    <property type="project" value="UniProtKB-KW"/>
</dbReference>
<dbReference type="GO" id="GO:0042773">
    <property type="term" value="P:ATP synthesis coupled electron transport"/>
    <property type="evidence" value="ECO:0007669"/>
    <property type="project" value="InterPro"/>
</dbReference>
<dbReference type="FunFam" id="1.10.287.3510:FF:000001">
    <property type="entry name" value="NADH-quinone oxidoreductase subunit K"/>
    <property type="match status" value="1"/>
</dbReference>
<dbReference type="Gene3D" id="1.10.287.3510">
    <property type="match status" value="1"/>
</dbReference>
<dbReference type="HAMAP" id="MF_01456">
    <property type="entry name" value="NDH1_NuoK"/>
    <property type="match status" value="1"/>
</dbReference>
<dbReference type="InterPro" id="IPR001133">
    <property type="entry name" value="NADH_UbQ_OxRdtase_chain4L/K"/>
</dbReference>
<dbReference type="InterPro" id="IPR039428">
    <property type="entry name" value="NUOK/Mnh_C1-like"/>
</dbReference>
<dbReference type="NCBIfam" id="NF004320">
    <property type="entry name" value="PRK05715.1-2"/>
    <property type="match status" value="1"/>
</dbReference>
<dbReference type="NCBIfam" id="NF004321">
    <property type="entry name" value="PRK05715.1-3"/>
    <property type="match status" value="1"/>
</dbReference>
<dbReference type="PANTHER" id="PTHR11434:SF21">
    <property type="entry name" value="NADH DEHYDROGENASE SUBUNIT 4L-RELATED"/>
    <property type="match status" value="1"/>
</dbReference>
<dbReference type="PANTHER" id="PTHR11434">
    <property type="entry name" value="NADH-UBIQUINONE OXIDOREDUCTASE SUBUNIT ND4L"/>
    <property type="match status" value="1"/>
</dbReference>
<dbReference type="Pfam" id="PF00420">
    <property type="entry name" value="Oxidored_q2"/>
    <property type="match status" value="1"/>
</dbReference>
<sequence>MPAFSLNAYVALSAVLFALGGIGVLVRRSPLAILMCIELMLNAANLLFVAFGRAHGGYEGQIMAFLVITVAAAEVAIGLALTVLLFRRRAEVDVDRVNELKL</sequence>
<protein>
    <recommendedName>
        <fullName evidence="1">NADH-quinone oxidoreductase subunit K 1</fullName>
        <ecNumber evidence="1">7.1.1.-</ecNumber>
    </recommendedName>
    <alternativeName>
        <fullName evidence="1">NADH dehydrogenase I subunit K 1</fullName>
    </alternativeName>
    <alternativeName>
        <fullName evidence="1">NDH-1 subunit K 1</fullName>
    </alternativeName>
</protein>
<organism>
    <name type="scientific">Symbiobacterium thermophilum (strain DSM 24528 / JCM 14929 / IAM 14863 / T)</name>
    <dbReference type="NCBI Taxonomy" id="292459"/>
    <lineage>
        <taxon>Bacteria</taxon>
        <taxon>Bacillati</taxon>
        <taxon>Bacillota</taxon>
        <taxon>Clostridia</taxon>
        <taxon>Eubacteriales</taxon>
        <taxon>Symbiobacteriaceae</taxon>
        <taxon>Symbiobacterium</taxon>
    </lineage>
</organism>
<name>NUOK1_SYMTH</name>
<evidence type="ECO:0000255" key="1">
    <source>
        <dbReference type="HAMAP-Rule" id="MF_01456"/>
    </source>
</evidence>
<proteinExistence type="inferred from homology"/>